<organismHost>
    <name type="scientific">Musa</name>
    <dbReference type="NCBI Taxonomy" id="4640"/>
</organismHost>
<reference key="1">
    <citation type="journal article" date="1995" name="J. Gen. Virol.">
        <title>The genome organization of banana bunchy top virus: analysis of six ssDNA components.</title>
        <authorList>
            <person name="Burns T.M."/>
            <person name="Harding R.M."/>
            <person name="Dale J.L."/>
        </authorList>
    </citation>
    <scope>NUCLEOTIDE SEQUENCE [GENOMIC DNA]</scope>
</reference>
<reference key="2">
    <citation type="journal article" date="2000" name="J. Gen. Virol.">
        <title>Functional analysis of proteins encoded by banana bunchy top virus DNA-4 to -6.</title>
        <authorList>
            <person name="Wanitchakorn R."/>
            <person name="Hafner G.J."/>
            <person name="Harding R.M."/>
            <person name="Dale J.L."/>
        </authorList>
    </citation>
    <scope>INTERACTION WITH HUMAN RB1 AND WHEAT RBR2</scope>
</reference>
<reference key="3">
    <citation type="journal article" date="2011" name="Virus Genes">
        <title>Identification of a major pathogenicity determinant and suppressors of RNA silencing encoded by a South Pacific isolate of Banana bunchy top virus originating from Pakistan.</title>
        <authorList>
            <person name="Amin I."/>
            <person name="Ilyas M."/>
            <person name="Qazi J."/>
            <person name="Bashir R."/>
            <person name="Yadav J.S."/>
            <person name="Mansoor S."/>
            <person name="Fauquet C.M."/>
            <person name="Briddon R.W."/>
        </authorList>
    </citation>
    <scope>FUNCTION</scope>
</reference>
<feature type="chain" id="PRO_0000378517" description="Cell cycle link protein">
    <location>
        <begin position="1"/>
        <end position="161"/>
    </location>
</feature>
<feature type="region of interest" description="Binding to host SKP1 protein" evidence="2">
    <location>
        <begin position="9"/>
        <end position="21"/>
    </location>
</feature>
<feature type="short sequence motif" description="LXCXE motif, interaction with host RBR" evidence="1">
    <location>
        <begin position="111"/>
        <end position="115"/>
    </location>
</feature>
<organism>
    <name type="scientific">Banana bunchy top virus (isolate Autralia)</name>
    <name type="common">BBTV</name>
    <dbReference type="NCBI Taxonomy" id="645099"/>
    <lineage>
        <taxon>Viruses</taxon>
        <taxon>Monodnaviria</taxon>
        <taxon>Shotokuvirae</taxon>
        <taxon>Cressdnaviricota</taxon>
        <taxon>Arfiviricetes</taxon>
        <taxon>Mulpavirales</taxon>
        <taxon>Nanoviridae</taxon>
        <taxon>Babuvirus</taxon>
        <taxon>Babuvirus musae</taxon>
        <taxon>Banana bunchy top virus</taxon>
    </lineage>
</organism>
<sequence length="161" mass="18972">MEFWESSAMPDDVKREIKEIYWEDRKKLLFCQKLKSYVRRILVYGDQEDALAGVKDMKTSIIRYSEYLKKPCVVICCVSNKSIVYRLNSMVFFYHEYLEELGGDYSVYQDLYCDEVLSSSSTEEEDVGVIYRNVIMASTQEKFSWSDCQQIVISDYDVTLL</sequence>
<protein>
    <recommendedName>
        <fullName>Cell cycle link protein</fullName>
        <shortName>Clink</shortName>
    </recommendedName>
</protein>
<comment type="function">
    <text evidence="1 3">Interacts with and disrupts the function of host retinoblastoma-related proteins RBR, which are key regulators of the cell cycle. Induces transcriptional activation of E2F-regulated S-phase and G2/M-phase-specific genes. Inactivation of the ability of RBR to arrest the cell cycle leads to the stimulation of viral DNA replication (By similarity). Acts as a suppressor of RNA-mediated gene silencing, also known as post-transcriptional gene silencing (PTGS), a mechanism of plant viral defense that limits the accumulation of viral RNAs.</text>
</comment>
<comment type="subunit">
    <text evidence="4">Interacts with host SKP1. Interacts (via LXCXE domain) with host retinoblastoma-related protein 2 (RBR2). Interacts (via LXCXE domain) with human RB1. Interacts (via LXCXE domain) with retinoblastoma-related proteins (RBR) (Probable).</text>
</comment>
<dbReference type="EMBL" id="L41578">
    <property type="protein sequence ID" value="AAA87371.1"/>
    <property type="molecule type" value="Genomic_DNA"/>
</dbReference>
<dbReference type="RefSeq" id="NP_604480.1">
    <property type="nucleotide sequence ID" value="NC_003477.1"/>
</dbReference>
<dbReference type="KEGG" id="vg:963870"/>
<dbReference type="Proteomes" id="UP000002339">
    <property type="component" value="Genome"/>
</dbReference>
<dbReference type="GO" id="GO:0052170">
    <property type="term" value="P:symbiont-mediated suppression of host innate immune response"/>
    <property type="evidence" value="ECO:0007669"/>
    <property type="project" value="UniProtKB-KW"/>
</dbReference>
<dbReference type="InterPro" id="IPR045832">
    <property type="entry name" value="Clink"/>
</dbReference>
<dbReference type="Pfam" id="PF19411">
    <property type="entry name" value="Clink"/>
    <property type="match status" value="1"/>
</dbReference>
<keyword id="KW-0945">Host-virus interaction</keyword>
<keyword id="KW-1090">Inhibition of host innate immune response by virus</keyword>
<keyword id="KW-1185">Reference proteome</keyword>
<keyword id="KW-0941">Suppressor of RNA silencing</keyword>
<keyword id="KW-0899">Viral immunoevasion</keyword>
<evidence type="ECO:0000250" key="1"/>
<evidence type="ECO:0000255" key="2"/>
<evidence type="ECO:0000269" key="3">
    <source>
    </source>
</evidence>
<evidence type="ECO:0000305" key="4">
    <source>
    </source>
</evidence>
<gene>
    <name type="primary">DNA-C</name>
    <name type="synonym">C5</name>
</gene>
<proteinExistence type="evidence at protein level"/>
<name>CLINK_BBTVA</name>
<accession>Q65389</accession>